<proteinExistence type="inferred from homology"/>
<name>PSBK_GLOC7</name>
<dbReference type="EMBL" id="CP001291">
    <property type="protein sequence ID" value="ACK68572.1"/>
    <property type="molecule type" value="Genomic_DNA"/>
</dbReference>
<dbReference type="RefSeq" id="WP_012597523.1">
    <property type="nucleotide sequence ID" value="NC_011729.1"/>
</dbReference>
<dbReference type="SMR" id="B7K989"/>
<dbReference type="STRING" id="65393.PCC7424_0102"/>
<dbReference type="KEGG" id="cyc:PCC7424_0102"/>
<dbReference type="eggNOG" id="ENOG5032YQR">
    <property type="taxonomic scope" value="Bacteria"/>
</dbReference>
<dbReference type="HOGENOM" id="CLU_174355_0_0_3"/>
<dbReference type="Proteomes" id="UP000002384">
    <property type="component" value="Chromosome"/>
</dbReference>
<dbReference type="GO" id="GO:0009539">
    <property type="term" value="C:photosystem II reaction center"/>
    <property type="evidence" value="ECO:0007669"/>
    <property type="project" value="InterPro"/>
</dbReference>
<dbReference type="GO" id="GO:0031676">
    <property type="term" value="C:plasma membrane-derived thylakoid membrane"/>
    <property type="evidence" value="ECO:0007669"/>
    <property type="project" value="UniProtKB-SubCell"/>
</dbReference>
<dbReference type="GO" id="GO:0015979">
    <property type="term" value="P:photosynthesis"/>
    <property type="evidence" value="ECO:0007669"/>
    <property type="project" value="UniProtKB-UniRule"/>
</dbReference>
<dbReference type="HAMAP" id="MF_00441">
    <property type="entry name" value="PSII_PsbK"/>
    <property type="match status" value="1"/>
</dbReference>
<dbReference type="InterPro" id="IPR003687">
    <property type="entry name" value="PSII_PsbK"/>
</dbReference>
<dbReference type="InterPro" id="IPR037270">
    <property type="entry name" value="PSII_PsbK_sf"/>
</dbReference>
<dbReference type="NCBIfam" id="NF002715">
    <property type="entry name" value="PRK02553.1"/>
    <property type="match status" value="1"/>
</dbReference>
<dbReference type="PANTHER" id="PTHR35325">
    <property type="match status" value="1"/>
</dbReference>
<dbReference type="PANTHER" id="PTHR35325:SF1">
    <property type="entry name" value="PHOTOSYSTEM II REACTION CENTER PROTEIN K"/>
    <property type="match status" value="1"/>
</dbReference>
<dbReference type="Pfam" id="PF02533">
    <property type="entry name" value="PsbK"/>
    <property type="match status" value="1"/>
</dbReference>
<dbReference type="SUPFAM" id="SSF161037">
    <property type="entry name" value="Photosystem II reaction center protein K, PsbK"/>
    <property type="match status" value="1"/>
</dbReference>
<sequence length="45" mass="5108">MDFALLLAKLPEAYQIFDPLVDVLPLIPLFFLLLAFVWQAAVGFK</sequence>
<evidence type="ECO:0000255" key="1">
    <source>
        <dbReference type="HAMAP-Rule" id="MF_00441"/>
    </source>
</evidence>
<accession>B7K989</accession>
<feature type="propeptide" id="PRO_1000124571" evidence="1">
    <location>
        <begin position="1"/>
        <end position="8"/>
    </location>
</feature>
<feature type="chain" id="PRO_1000124572" description="Photosystem II reaction center protein K" evidence="1">
    <location>
        <begin position="9"/>
        <end position="45"/>
    </location>
</feature>
<feature type="transmembrane region" description="Helical" evidence="1">
    <location>
        <begin position="24"/>
        <end position="44"/>
    </location>
</feature>
<organism>
    <name type="scientific">Gloeothece citriformis (strain PCC 7424)</name>
    <name type="common">Cyanothece sp. (strain PCC 7424)</name>
    <dbReference type="NCBI Taxonomy" id="65393"/>
    <lineage>
        <taxon>Bacteria</taxon>
        <taxon>Bacillati</taxon>
        <taxon>Cyanobacteriota</taxon>
        <taxon>Cyanophyceae</taxon>
        <taxon>Oscillatoriophycideae</taxon>
        <taxon>Chroococcales</taxon>
        <taxon>Aphanothecaceae</taxon>
        <taxon>Gloeothece</taxon>
        <taxon>Gloeothece citriformis</taxon>
    </lineage>
</organism>
<gene>
    <name evidence="1" type="primary">psbK</name>
    <name type="ordered locus">PCC7424_0102</name>
</gene>
<comment type="function">
    <text evidence="1">One of the components of the core complex of photosystem II (PSII). PSII is a light-driven water:plastoquinone oxidoreductase that uses light energy to abstract electrons from H(2)O, generating O(2) and a proton gradient subsequently used for ATP formation. It consists of a core antenna complex that captures photons, and an electron transfer chain that converts photonic excitation into a charge separation.</text>
</comment>
<comment type="subunit">
    <text evidence="1">PSII is composed of 1 copy each of membrane proteins PsbA, PsbB, PsbC, PsbD, PsbE, PsbF, PsbH, PsbI, PsbJ, PsbK, PsbL, PsbM, PsbT, PsbX, PsbY, PsbZ, Psb30/Ycf12, peripheral proteins PsbO, CyanoQ (PsbQ), PsbU, PsbV and a large number of cofactors. It forms dimeric complexes.</text>
</comment>
<comment type="subcellular location">
    <subcellularLocation>
        <location evidence="1">Cellular thylakoid membrane</location>
        <topology evidence="1">Single-pass membrane protein</topology>
    </subcellularLocation>
</comment>
<comment type="similarity">
    <text evidence="1">Belongs to the PsbK family.</text>
</comment>
<protein>
    <recommendedName>
        <fullName evidence="1">Photosystem II reaction center protein K</fullName>
        <shortName evidence="1">PSII-K</shortName>
    </recommendedName>
</protein>
<reference key="1">
    <citation type="journal article" date="2011" name="MBio">
        <title>Novel metabolic attributes of the genus Cyanothece, comprising a group of unicellular nitrogen-fixing Cyanobacteria.</title>
        <authorList>
            <person name="Bandyopadhyay A."/>
            <person name="Elvitigala T."/>
            <person name="Welsh E."/>
            <person name="Stockel J."/>
            <person name="Liberton M."/>
            <person name="Min H."/>
            <person name="Sherman L.A."/>
            <person name="Pakrasi H.B."/>
        </authorList>
    </citation>
    <scope>NUCLEOTIDE SEQUENCE [LARGE SCALE GENOMIC DNA]</scope>
    <source>
        <strain>PCC 7424</strain>
    </source>
</reference>
<keyword id="KW-0472">Membrane</keyword>
<keyword id="KW-0602">Photosynthesis</keyword>
<keyword id="KW-0604">Photosystem II</keyword>
<keyword id="KW-0674">Reaction center</keyword>
<keyword id="KW-1185">Reference proteome</keyword>
<keyword id="KW-0793">Thylakoid</keyword>
<keyword id="KW-0812">Transmembrane</keyword>
<keyword id="KW-1133">Transmembrane helix</keyword>